<dbReference type="EMBL" id="CP000450">
    <property type="protein sequence ID" value="ABI58798.1"/>
    <property type="molecule type" value="Genomic_DNA"/>
</dbReference>
<dbReference type="RefSeq" id="WP_011633640.1">
    <property type="nucleotide sequence ID" value="NC_008344.1"/>
</dbReference>
<dbReference type="SMR" id="Q0AIM8"/>
<dbReference type="STRING" id="335283.Neut_0522"/>
<dbReference type="KEGG" id="net:Neut_0522"/>
<dbReference type="eggNOG" id="COG3158">
    <property type="taxonomic scope" value="Bacteria"/>
</dbReference>
<dbReference type="HOGENOM" id="CLU_008142_4_2_4"/>
<dbReference type="OrthoDB" id="9805577at2"/>
<dbReference type="Proteomes" id="UP000001966">
    <property type="component" value="Chromosome"/>
</dbReference>
<dbReference type="GO" id="GO:0005886">
    <property type="term" value="C:plasma membrane"/>
    <property type="evidence" value="ECO:0007669"/>
    <property type="project" value="UniProtKB-SubCell"/>
</dbReference>
<dbReference type="GO" id="GO:0015079">
    <property type="term" value="F:potassium ion transmembrane transporter activity"/>
    <property type="evidence" value="ECO:0007669"/>
    <property type="project" value="UniProtKB-UniRule"/>
</dbReference>
<dbReference type="GO" id="GO:0015293">
    <property type="term" value="F:symporter activity"/>
    <property type="evidence" value="ECO:0007669"/>
    <property type="project" value="UniProtKB-UniRule"/>
</dbReference>
<dbReference type="HAMAP" id="MF_01522">
    <property type="entry name" value="Kup"/>
    <property type="match status" value="1"/>
</dbReference>
<dbReference type="InterPro" id="IPR003855">
    <property type="entry name" value="K+_transporter"/>
</dbReference>
<dbReference type="InterPro" id="IPR053952">
    <property type="entry name" value="K_trans_C"/>
</dbReference>
<dbReference type="InterPro" id="IPR053951">
    <property type="entry name" value="K_trans_N"/>
</dbReference>
<dbReference type="InterPro" id="IPR023051">
    <property type="entry name" value="Kup"/>
</dbReference>
<dbReference type="PANTHER" id="PTHR30540:SF79">
    <property type="entry name" value="LOW AFFINITY POTASSIUM TRANSPORT SYSTEM PROTEIN KUP"/>
    <property type="match status" value="1"/>
</dbReference>
<dbReference type="PANTHER" id="PTHR30540">
    <property type="entry name" value="OSMOTIC STRESS POTASSIUM TRANSPORTER"/>
    <property type="match status" value="1"/>
</dbReference>
<dbReference type="Pfam" id="PF02705">
    <property type="entry name" value="K_trans"/>
    <property type="match status" value="1"/>
</dbReference>
<dbReference type="Pfam" id="PF22776">
    <property type="entry name" value="K_trans_C"/>
    <property type="match status" value="1"/>
</dbReference>
<evidence type="ECO:0000255" key="1">
    <source>
        <dbReference type="HAMAP-Rule" id="MF_01522"/>
    </source>
</evidence>
<evidence type="ECO:0000256" key="2">
    <source>
        <dbReference type="SAM" id="MobiDB-lite"/>
    </source>
</evidence>
<protein>
    <recommendedName>
        <fullName evidence="1">Probable potassium transport system protein Kup</fullName>
    </recommendedName>
</protein>
<proteinExistence type="inferred from homology"/>
<comment type="function">
    <text evidence="1">Transport of potassium into the cell. Likely operates as a K(+):H(+) symporter.</text>
</comment>
<comment type="catalytic activity">
    <reaction evidence="1">
        <text>K(+)(in) + H(+)(in) = K(+)(out) + H(+)(out)</text>
        <dbReference type="Rhea" id="RHEA:28490"/>
        <dbReference type="ChEBI" id="CHEBI:15378"/>
        <dbReference type="ChEBI" id="CHEBI:29103"/>
    </reaction>
    <physiologicalReaction direction="right-to-left" evidence="1">
        <dbReference type="Rhea" id="RHEA:28492"/>
    </physiologicalReaction>
</comment>
<comment type="subcellular location">
    <subcellularLocation>
        <location evidence="1">Cell inner membrane</location>
        <topology evidence="1">Multi-pass membrane protein</topology>
    </subcellularLocation>
</comment>
<comment type="similarity">
    <text evidence="1">Belongs to the HAK/KUP transporter (TC 2.A.72) family.</text>
</comment>
<keyword id="KW-0997">Cell inner membrane</keyword>
<keyword id="KW-1003">Cell membrane</keyword>
<keyword id="KW-0406">Ion transport</keyword>
<keyword id="KW-0472">Membrane</keyword>
<keyword id="KW-0630">Potassium</keyword>
<keyword id="KW-0633">Potassium transport</keyword>
<keyword id="KW-0769">Symport</keyword>
<keyword id="KW-0812">Transmembrane</keyword>
<keyword id="KW-1133">Transmembrane helix</keyword>
<keyword id="KW-0813">Transport</keyword>
<sequence length="641" mass="70742">MALDSESSASNRQGSRNEQDTNPRLTAALCLTALGVVYGDIATSPLYAFREALHNIAPDSRTPESILGILSLIFWALIILVSIKYLLIIMRADNHGEGGILALLALLRPWRGSPQHQRNVLIVLGLFGAALLYGDGMITPAISVLSAMEGLEVAAPQLTSYIIPATTVILVLLFMVQKRGTARIGRVFGPIMLVWFVVIALLGLNGIIHHPQVLVAVNPYYGINFFTDNGWSAFRVLGGVFLALTGAEALYADMGHVGRAPIRLMWFALVLPALLLNYFGQGALLLLDPHEAQPFFHLAPPSFLYSLVGLATLATIIASQAIISGVFSLTRQAIQLGQSPRLTLVQTSSEEIGQVYVPAANWFMMIAAVWLVLHFRSSDNLAGAFGIAVSGTMVITTILAFFVMRERWHWNILTAVAVTVGFLIIDLAFFSSNLLKITDGGWFPLAIAVFIFTLMITWQQGRQLLIQRIHKETESFQDFLQRIVTDPPVRVSGTAVFLTIHQHDTPPALLYQLIHNKALHEQVVLVTVITEEVPRVPAAERLEVMELSSGFHRIIVHYGFMQSPNVPVALRACETLGLKIDLDTTTYYLSRASLIPTDERPGMALWRDRLFAFMSRNSAWPTAFYHLPPEHVIELGIQVEL</sequence>
<gene>
    <name evidence="1" type="primary">kup</name>
    <name type="ordered locus">Neut_0522</name>
</gene>
<accession>Q0AIM8</accession>
<organism>
    <name type="scientific">Nitrosomonas eutropha (strain DSM 101675 / C91 / Nm57)</name>
    <dbReference type="NCBI Taxonomy" id="335283"/>
    <lineage>
        <taxon>Bacteria</taxon>
        <taxon>Pseudomonadati</taxon>
        <taxon>Pseudomonadota</taxon>
        <taxon>Betaproteobacteria</taxon>
        <taxon>Nitrosomonadales</taxon>
        <taxon>Nitrosomonadaceae</taxon>
        <taxon>Nitrosomonas</taxon>
    </lineage>
</organism>
<reference key="1">
    <citation type="journal article" date="2007" name="Environ. Microbiol.">
        <title>Whole-genome analysis of the ammonia-oxidizing bacterium, Nitrosomonas eutropha C91: implications for niche adaptation.</title>
        <authorList>
            <person name="Stein L.Y."/>
            <person name="Arp D.J."/>
            <person name="Berube P.M."/>
            <person name="Chain P.S."/>
            <person name="Hauser L."/>
            <person name="Jetten M.S."/>
            <person name="Klotz M.G."/>
            <person name="Larimer F.W."/>
            <person name="Norton J.M."/>
            <person name="Op den Camp H.J.M."/>
            <person name="Shin M."/>
            <person name="Wei X."/>
        </authorList>
    </citation>
    <scope>NUCLEOTIDE SEQUENCE [LARGE SCALE GENOMIC DNA]</scope>
    <source>
        <strain>DSM 101675 / C91 / Nm57</strain>
    </source>
</reference>
<feature type="chain" id="PRO_0000279804" description="Probable potassium transport system protein Kup">
    <location>
        <begin position="1"/>
        <end position="641"/>
    </location>
</feature>
<feature type="transmembrane region" description="Helical" evidence="1">
    <location>
        <begin position="29"/>
        <end position="49"/>
    </location>
</feature>
<feature type="transmembrane region" description="Helical" evidence="1">
    <location>
        <begin position="69"/>
        <end position="89"/>
    </location>
</feature>
<feature type="transmembrane region" description="Helical" evidence="1">
    <location>
        <begin position="120"/>
        <end position="140"/>
    </location>
</feature>
<feature type="transmembrane region" description="Helical" evidence="1">
    <location>
        <begin position="156"/>
        <end position="176"/>
    </location>
</feature>
<feature type="transmembrane region" description="Helical" evidence="1">
    <location>
        <begin position="188"/>
        <end position="208"/>
    </location>
</feature>
<feature type="transmembrane region" description="Helical" evidence="1">
    <location>
        <begin position="236"/>
        <end position="256"/>
    </location>
</feature>
<feature type="transmembrane region" description="Helical" evidence="1">
    <location>
        <begin position="267"/>
        <end position="287"/>
    </location>
</feature>
<feature type="transmembrane region" description="Helical" evidence="1">
    <location>
        <begin position="307"/>
        <end position="327"/>
    </location>
</feature>
<feature type="transmembrane region" description="Helical" evidence="1">
    <location>
        <begin position="355"/>
        <end position="375"/>
    </location>
</feature>
<feature type="transmembrane region" description="Helical" evidence="1">
    <location>
        <begin position="384"/>
        <end position="404"/>
    </location>
</feature>
<feature type="transmembrane region" description="Helical" evidence="1">
    <location>
        <begin position="410"/>
        <end position="430"/>
    </location>
</feature>
<feature type="transmembrane region" description="Helical" evidence="1">
    <location>
        <begin position="437"/>
        <end position="457"/>
    </location>
</feature>
<feature type="region of interest" description="Disordered" evidence="2">
    <location>
        <begin position="1"/>
        <end position="20"/>
    </location>
</feature>
<feature type="compositionally biased region" description="Polar residues" evidence="2">
    <location>
        <begin position="1"/>
        <end position="14"/>
    </location>
</feature>
<name>KUP_NITEC</name>